<evidence type="ECO:0000255" key="1">
    <source>
        <dbReference type="HAMAP-Rule" id="MF_00577"/>
    </source>
</evidence>
<gene>
    <name evidence="1" type="primary">hutU</name>
    <name type="ordered locus">Noca_4397</name>
</gene>
<accession>A1SQ09</accession>
<proteinExistence type="inferred from homology"/>
<organism>
    <name type="scientific">Nocardioides sp. (strain ATCC BAA-499 / JS614)</name>
    <dbReference type="NCBI Taxonomy" id="196162"/>
    <lineage>
        <taxon>Bacteria</taxon>
        <taxon>Bacillati</taxon>
        <taxon>Actinomycetota</taxon>
        <taxon>Actinomycetes</taxon>
        <taxon>Propionibacteriales</taxon>
        <taxon>Nocardioidaceae</taxon>
        <taxon>Nocardioides</taxon>
    </lineage>
</organism>
<dbReference type="EC" id="4.2.1.49" evidence="1"/>
<dbReference type="EMBL" id="CP000509">
    <property type="protein sequence ID" value="ABL83894.1"/>
    <property type="molecule type" value="Genomic_DNA"/>
</dbReference>
<dbReference type="RefSeq" id="WP_011757823.1">
    <property type="nucleotide sequence ID" value="NC_008699.1"/>
</dbReference>
<dbReference type="SMR" id="A1SQ09"/>
<dbReference type="STRING" id="196162.Noca_4397"/>
<dbReference type="KEGG" id="nca:Noca_4397"/>
<dbReference type="eggNOG" id="COG2987">
    <property type="taxonomic scope" value="Bacteria"/>
</dbReference>
<dbReference type="HOGENOM" id="CLU_018868_0_1_11"/>
<dbReference type="OrthoDB" id="9764874at2"/>
<dbReference type="UniPathway" id="UPA00379">
    <property type="reaction ID" value="UER00550"/>
</dbReference>
<dbReference type="Proteomes" id="UP000000640">
    <property type="component" value="Chromosome"/>
</dbReference>
<dbReference type="GO" id="GO:0005737">
    <property type="term" value="C:cytoplasm"/>
    <property type="evidence" value="ECO:0007669"/>
    <property type="project" value="UniProtKB-SubCell"/>
</dbReference>
<dbReference type="GO" id="GO:0016153">
    <property type="term" value="F:urocanate hydratase activity"/>
    <property type="evidence" value="ECO:0007669"/>
    <property type="project" value="UniProtKB-UniRule"/>
</dbReference>
<dbReference type="GO" id="GO:0019556">
    <property type="term" value="P:L-histidine catabolic process to glutamate and formamide"/>
    <property type="evidence" value="ECO:0007669"/>
    <property type="project" value="UniProtKB-UniPathway"/>
</dbReference>
<dbReference type="GO" id="GO:0019557">
    <property type="term" value="P:L-histidine catabolic process to glutamate and formate"/>
    <property type="evidence" value="ECO:0007669"/>
    <property type="project" value="UniProtKB-UniPathway"/>
</dbReference>
<dbReference type="FunFam" id="3.40.50.10730:FF:000001">
    <property type="entry name" value="Urocanate hydratase"/>
    <property type="match status" value="1"/>
</dbReference>
<dbReference type="Gene3D" id="3.40.50.10730">
    <property type="entry name" value="Urocanase like domains"/>
    <property type="match status" value="1"/>
</dbReference>
<dbReference type="Gene3D" id="3.40.1770.10">
    <property type="entry name" value="Urocanase superfamily"/>
    <property type="match status" value="1"/>
</dbReference>
<dbReference type="HAMAP" id="MF_00577">
    <property type="entry name" value="HutU"/>
    <property type="match status" value="1"/>
</dbReference>
<dbReference type="InterPro" id="IPR055351">
    <property type="entry name" value="Urocanase"/>
</dbReference>
<dbReference type="InterPro" id="IPR023637">
    <property type="entry name" value="Urocanase-like"/>
</dbReference>
<dbReference type="InterPro" id="IPR035401">
    <property type="entry name" value="Urocanase_C"/>
</dbReference>
<dbReference type="InterPro" id="IPR038364">
    <property type="entry name" value="Urocanase_central_sf"/>
</dbReference>
<dbReference type="InterPro" id="IPR023636">
    <property type="entry name" value="Urocanase_CS"/>
</dbReference>
<dbReference type="InterPro" id="IPR035400">
    <property type="entry name" value="Urocanase_N"/>
</dbReference>
<dbReference type="InterPro" id="IPR035085">
    <property type="entry name" value="Urocanase_Rossmann-like"/>
</dbReference>
<dbReference type="InterPro" id="IPR036190">
    <property type="entry name" value="Urocanase_sf"/>
</dbReference>
<dbReference type="NCBIfam" id="TIGR01228">
    <property type="entry name" value="hutU"/>
    <property type="match status" value="1"/>
</dbReference>
<dbReference type="NCBIfam" id="NF003820">
    <property type="entry name" value="PRK05414.1"/>
    <property type="match status" value="1"/>
</dbReference>
<dbReference type="PANTHER" id="PTHR12216">
    <property type="entry name" value="UROCANATE HYDRATASE"/>
    <property type="match status" value="1"/>
</dbReference>
<dbReference type="PANTHER" id="PTHR12216:SF4">
    <property type="entry name" value="UROCANATE HYDRATASE"/>
    <property type="match status" value="1"/>
</dbReference>
<dbReference type="Pfam" id="PF01175">
    <property type="entry name" value="Urocanase"/>
    <property type="match status" value="1"/>
</dbReference>
<dbReference type="Pfam" id="PF17392">
    <property type="entry name" value="Urocanase_C"/>
    <property type="match status" value="1"/>
</dbReference>
<dbReference type="Pfam" id="PF17391">
    <property type="entry name" value="Urocanase_N"/>
    <property type="match status" value="1"/>
</dbReference>
<dbReference type="PIRSF" id="PIRSF001423">
    <property type="entry name" value="Urocanate_hydrat"/>
    <property type="match status" value="1"/>
</dbReference>
<dbReference type="SUPFAM" id="SSF111326">
    <property type="entry name" value="Urocanase"/>
    <property type="match status" value="1"/>
</dbReference>
<dbReference type="PROSITE" id="PS01233">
    <property type="entry name" value="UROCANASE"/>
    <property type="match status" value="1"/>
</dbReference>
<comment type="function">
    <text evidence="1">Catalyzes the conversion of urocanate to 4-imidazolone-5-propionate.</text>
</comment>
<comment type="catalytic activity">
    <reaction evidence="1">
        <text>4-imidazolone-5-propanoate = trans-urocanate + H2O</text>
        <dbReference type="Rhea" id="RHEA:13101"/>
        <dbReference type="ChEBI" id="CHEBI:15377"/>
        <dbReference type="ChEBI" id="CHEBI:17771"/>
        <dbReference type="ChEBI" id="CHEBI:77893"/>
        <dbReference type="EC" id="4.2.1.49"/>
    </reaction>
</comment>
<comment type="cofactor">
    <cofactor evidence="1">
        <name>NAD(+)</name>
        <dbReference type="ChEBI" id="CHEBI:57540"/>
    </cofactor>
    <text evidence="1">Binds 1 NAD(+) per subunit.</text>
</comment>
<comment type="pathway">
    <text evidence="1">Amino-acid degradation; L-histidine degradation into L-glutamate; N-formimidoyl-L-glutamate from L-histidine: step 2/3.</text>
</comment>
<comment type="subcellular location">
    <subcellularLocation>
        <location evidence="1">Cytoplasm</location>
    </subcellularLocation>
</comment>
<comment type="similarity">
    <text evidence="1">Belongs to the urocanase family.</text>
</comment>
<feature type="chain" id="PRO_1000025135" description="Urocanate hydratase">
    <location>
        <begin position="1"/>
        <end position="555"/>
    </location>
</feature>
<feature type="active site" evidence="1">
    <location>
        <position position="409"/>
    </location>
</feature>
<feature type="binding site" evidence="1">
    <location>
        <begin position="52"/>
        <end position="53"/>
    </location>
    <ligand>
        <name>NAD(+)</name>
        <dbReference type="ChEBI" id="CHEBI:57540"/>
    </ligand>
</feature>
<feature type="binding site" evidence="1">
    <location>
        <position position="130"/>
    </location>
    <ligand>
        <name>NAD(+)</name>
        <dbReference type="ChEBI" id="CHEBI:57540"/>
    </ligand>
</feature>
<feature type="binding site" evidence="1">
    <location>
        <begin position="176"/>
        <end position="178"/>
    </location>
    <ligand>
        <name>NAD(+)</name>
        <dbReference type="ChEBI" id="CHEBI:57540"/>
    </ligand>
</feature>
<feature type="binding site" evidence="1">
    <location>
        <position position="196"/>
    </location>
    <ligand>
        <name>NAD(+)</name>
        <dbReference type="ChEBI" id="CHEBI:57540"/>
    </ligand>
</feature>
<feature type="binding site" evidence="1">
    <location>
        <position position="201"/>
    </location>
    <ligand>
        <name>NAD(+)</name>
        <dbReference type="ChEBI" id="CHEBI:57540"/>
    </ligand>
</feature>
<feature type="binding site" evidence="1">
    <location>
        <begin position="242"/>
        <end position="243"/>
    </location>
    <ligand>
        <name>NAD(+)</name>
        <dbReference type="ChEBI" id="CHEBI:57540"/>
    </ligand>
</feature>
<feature type="binding site" evidence="1">
    <location>
        <begin position="263"/>
        <end position="267"/>
    </location>
    <ligand>
        <name>NAD(+)</name>
        <dbReference type="ChEBI" id="CHEBI:57540"/>
    </ligand>
</feature>
<feature type="binding site" evidence="1">
    <location>
        <begin position="272"/>
        <end position="273"/>
    </location>
    <ligand>
        <name>NAD(+)</name>
        <dbReference type="ChEBI" id="CHEBI:57540"/>
    </ligand>
</feature>
<feature type="binding site" evidence="1">
    <location>
        <position position="321"/>
    </location>
    <ligand>
        <name>NAD(+)</name>
        <dbReference type="ChEBI" id="CHEBI:57540"/>
    </ligand>
</feature>
<feature type="binding site" evidence="1">
    <location>
        <position position="491"/>
    </location>
    <ligand>
        <name>NAD(+)</name>
        <dbReference type="ChEBI" id="CHEBI:57540"/>
    </ligand>
</feature>
<reference key="1">
    <citation type="submission" date="2006-12" db="EMBL/GenBank/DDBJ databases">
        <title>Complete sequence of chromosome 1 of Nocardioides sp. JS614.</title>
        <authorList>
            <person name="Copeland A."/>
            <person name="Lucas S."/>
            <person name="Lapidus A."/>
            <person name="Barry K."/>
            <person name="Detter J.C."/>
            <person name="Glavina del Rio T."/>
            <person name="Hammon N."/>
            <person name="Israni S."/>
            <person name="Dalin E."/>
            <person name="Tice H."/>
            <person name="Pitluck S."/>
            <person name="Thompson L.S."/>
            <person name="Brettin T."/>
            <person name="Bruce D."/>
            <person name="Han C."/>
            <person name="Tapia R."/>
            <person name="Schmutz J."/>
            <person name="Larimer F."/>
            <person name="Land M."/>
            <person name="Hauser L."/>
            <person name="Kyrpides N."/>
            <person name="Kim E."/>
            <person name="Mattes T."/>
            <person name="Gossett J."/>
            <person name="Richardson P."/>
        </authorList>
    </citation>
    <scope>NUCLEOTIDE SEQUENCE [LARGE SCALE GENOMIC DNA]</scope>
    <source>
        <strain>ATCC BAA-499 / JS614</strain>
    </source>
</reference>
<sequence>MTTPANPRLPIHAAHGTELTARSWQTEAPLRMLMNNLDPENAERPEDLVVYGGTGRAARSWEAYDALVRTLTTLGDDETMLVQSGKPVGVMRTHEWAPRVLIANSNLVGDWANWEEFRRLEDLGLTMYGQMTAGSWIYIGTQGILQGTFETFAAVADKRFGGTLAGTITVTAGLGGMGGAQPLAVTMNDGVVICVECDPERIRRRIDHRYLDVEAPSLEAAVALAVEARDERRPLSIGLLGNAAEVLPRILETEVPVDIVTDQTSAHDPLYYLPVGVPFEEWAARREADPEGFTKEARASMAAHVRAMVELQDRGAEVFDYGNSIRDEARKGGYDRAFEFPGFVPAYIRPLFCEGKGPFRWAALSGDPADIAATDRAILELFPANERLRKWITMAGERVHFQGLPARICWLGYGERHLAGLRFNEMVASGELKAPIVIGRDHLDCGSVASPYRETEGMLDGSDAIADWAVLNALVNTASGASWVSFHHGGGVGIGRSLHAGQVCVADGTDLAAQKIERVLTNDPGMGVIRHVDAGYDRAAEVARERGVRIPMSEG</sequence>
<name>HUTU_NOCSJ</name>
<protein>
    <recommendedName>
        <fullName evidence="1">Urocanate hydratase</fullName>
        <shortName evidence="1">Urocanase</shortName>
        <ecNumber evidence="1">4.2.1.49</ecNumber>
    </recommendedName>
    <alternativeName>
        <fullName evidence="1">Imidazolonepropionate hydrolase</fullName>
    </alternativeName>
</protein>
<keyword id="KW-0963">Cytoplasm</keyword>
<keyword id="KW-0369">Histidine metabolism</keyword>
<keyword id="KW-0456">Lyase</keyword>
<keyword id="KW-0520">NAD</keyword>
<keyword id="KW-1185">Reference proteome</keyword>